<sequence>MKNQWNNILSIGEKVLNGEKITADEALTLSKSNGSDIFLLCSFANKLREKFNGNHVDLCSVINAKSGNCSEDCAFCAQSAHHKANVSCYPLLNEDKILEMAKQREAYGARHCDIATSGLGYTGDEKDFQTILKAFKKMKENTNLKLCACLGTLTEKAMNSLAAVGVERYNHNLETAKSFYKNIVSTHGYDERIKTINYAKNAKMEVCSGMIVGLGETMEQRIEHALLLRDLNVDAVPVNILNPVKGTKLENAKPLSPMEIIKTFAIIRFILPDKIIRYAGGREKNLRSLQPLGFLSGLNGMLIGNYLTTNGQSVNDDFNMLKDLELEY</sequence>
<accession>Q97MI6</accession>
<reference key="1">
    <citation type="journal article" date="2001" name="J. Bacteriol.">
        <title>Genome sequence and comparative analysis of the solvent-producing bacterium Clostridium acetobutylicum.</title>
        <authorList>
            <person name="Noelling J."/>
            <person name="Breton G."/>
            <person name="Omelchenko M.V."/>
            <person name="Makarova K.S."/>
            <person name="Zeng Q."/>
            <person name="Gibson R."/>
            <person name="Lee H.M."/>
            <person name="Dubois J."/>
            <person name="Qiu D."/>
            <person name="Hitti J."/>
            <person name="Wolf Y.I."/>
            <person name="Tatusov R.L."/>
            <person name="Sabathe F."/>
            <person name="Doucette-Stamm L.A."/>
            <person name="Soucaille P."/>
            <person name="Daly M.J."/>
            <person name="Bennett G.N."/>
            <person name="Koonin E.V."/>
            <person name="Smith D.R."/>
        </authorList>
    </citation>
    <scope>NUCLEOTIDE SEQUENCE [LARGE SCALE GENOMIC DNA]</scope>
    <source>
        <strain>ATCC 824 / DSM 792 / JCM 1419 / IAM 19013 / LMG 5710 / NBRC 13948 / NRRL B-527 / VKM B-1787 / 2291 / W</strain>
    </source>
</reference>
<name>BIOB_CLOAB</name>
<evidence type="ECO:0000255" key="1">
    <source>
        <dbReference type="HAMAP-Rule" id="MF_01694"/>
    </source>
</evidence>
<evidence type="ECO:0000255" key="2">
    <source>
        <dbReference type="PROSITE-ProRule" id="PRU01266"/>
    </source>
</evidence>
<dbReference type="EC" id="2.8.1.6" evidence="1"/>
<dbReference type="EMBL" id="AE001437">
    <property type="protein sequence ID" value="AAK78192.1"/>
    <property type="molecule type" value="Genomic_DNA"/>
</dbReference>
<dbReference type="PIR" id="E96925">
    <property type="entry name" value="E96925"/>
</dbReference>
<dbReference type="RefSeq" id="NP_346852.1">
    <property type="nucleotide sequence ID" value="NC_003030.1"/>
</dbReference>
<dbReference type="RefSeq" id="WP_010963534.1">
    <property type="nucleotide sequence ID" value="NC_003030.1"/>
</dbReference>
<dbReference type="SMR" id="Q97MI6"/>
<dbReference type="STRING" id="272562.CA_C0210"/>
<dbReference type="GeneID" id="44996702"/>
<dbReference type="KEGG" id="cac:CA_C0210"/>
<dbReference type="PATRIC" id="fig|272562.8.peg.395"/>
<dbReference type="eggNOG" id="COG0502">
    <property type="taxonomic scope" value="Bacteria"/>
</dbReference>
<dbReference type="HOGENOM" id="CLU_033172_2_1_9"/>
<dbReference type="OrthoDB" id="9786826at2"/>
<dbReference type="UniPathway" id="UPA00078">
    <property type="reaction ID" value="UER00162"/>
</dbReference>
<dbReference type="Proteomes" id="UP000000814">
    <property type="component" value="Chromosome"/>
</dbReference>
<dbReference type="GO" id="GO:0051537">
    <property type="term" value="F:2 iron, 2 sulfur cluster binding"/>
    <property type="evidence" value="ECO:0007669"/>
    <property type="project" value="UniProtKB-KW"/>
</dbReference>
<dbReference type="GO" id="GO:0051539">
    <property type="term" value="F:4 iron, 4 sulfur cluster binding"/>
    <property type="evidence" value="ECO:0007669"/>
    <property type="project" value="UniProtKB-KW"/>
</dbReference>
<dbReference type="GO" id="GO:0004076">
    <property type="term" value="F:biotin synthase activity"/>
    <property type="evidence" value="ECO:0007669"/>
    <property type="project" value="UniProtKB-UniRule"/>
</dbReference>
<dbReference type="GO" id="GO:0005506">
    <property type="term" value="F:iron ion binding"/>
    <property type="evidence" value="ECO:0007669"/>
    <property type="project" value="UniProtKB-UniRule"/>
</dbReference>
<dbReference type="GO" id="GO:0009102">
    <property type="term" value="P:biotin biosynthetic process"/>
    <property type="evidence" value="ECO:0007669"/>
    <property type="project" value="UniProtKB-UniRule"/>
</dbReference>
<dbReference type="CDD" id="cd01335">
    <property type="entry name" value="Radical_SAM"/>
    <property type="match status" value="1"/>
</dbReference>
<dbReference type="FunFam" id="3.20.20.70:FF:000026">
    <property type="entry name" value="Biotin synthase"/>
    <property type="match status" value="1"/>
</dbReference>
<dbReference type="Gene3D" id="3.20.20.70">
    <property type="entry name" value="Aldolase class I"/>
    <property type="match status" value="1"/>
</dbReference>
<dbReference type="HAMAP" id="MF_01694">
    <property type="entry name" value="BioB"/>
    <property type="match status" value="1"/>
</dbReference>
<dbReference type="InterPro" id="IPR013785">
    <property type="entry name" value="Aldolase_TIM"/>
</dbReference>
<dbReference type="InterPro" id="IPR010722">
    <property type="entry name" value="BATS_dom"/>
</dbReference>
<dbReference type="InterPro" id="IPR002684">
    <property type="entry name" value="Biotin_synth/BioAB"/>
</dbReference>
<dbReference type="InterPro" id="IPR024177">
    <property type="entry name" value="Biotin_synthase"/>
</dbReference>
<dbReference type="InterPro" id="IPR006638">
    <property type="entry name" value="Elp3/MiaA/NifB-like_rSAM"/>
</dbReference>
<dbReference type="InterPro" id="IPR007197">
    <property type="entry name" value="rSAM"/>
</dbReference>
<dbReference type="NCBIfam" id="TIGR00433">
    <property type="entry name" value="bioB"/>
    <property type="match status" value="1"/>
</dbReference>
<dbReference type="PANTHER" id="PTHR22976">
    <property type="entry name" value="BIOTIN SYNTHASE"/>
    <property type="match status" value="1"/>
</dbReference>
<dbReference type="PANTHER" id="PTHR22976:SF2">
    <property type="entry name" value="BIOTIN SYNTHASE, MITOCHONDRIAL"/>
    <property type="match status" value="1"/>
</dbReference>
<dbReference type="Pfam" id="PF06968">
    <property type="entry name" value="BATS"/>
    <property type="match status" value="1"/>
</dbReference>
<dbReference type="Pfam" id="PF04055">
    <property type="entry name" value="Radical_SAM"/>
    <property type="match status" value="1"/>
</dbReference>
<dbReference type="PIRSF" id="PIRSF001619">
    <property type="entry name" value="Biotin_synth"/>
    <property type="match status" value="1"/>
</dbReference>
<dbReference type="SFLD" id="SFLDG01060">
    <property type="entry name" value="BATS_domain_containing"/>
    <property type="match status" value="1"/>
</dbReference>
<dbReference type="SFLD" id="SFLDG01278">
    <property type="entry name" value="biotin_synthase_like"/>
    <property type="match status" value="1"/>
</dbReference>
<dbReference type="SMART" id="SM00876">
    <property type="entry name" value="BATS"/>
    <property type="match status" value="1"/>
</dbReference>
<dbReference type="SMART" id="SM00729">
    <property type="entry name" value="Elp3"/>
    <property type="match status" value="1"/>
</dbReference>
<dbReference type="SUPFAM" id="SSF102114">
    <property type="entry name" value="Radical SAM enzymes"/>
    <property type="match status" value="1"/>
</dbReference>
<dbReference type="PROSITE" id="PS51918">
    <property type="entry name" value="RADICAL_SAM"/>
    <property type="match status" value="1"/>
</dbReference>
<comment type="function">
    <text evidence="1">Catalyzes the conversion of dethiobiotin (DTB) to biotin by the insertion of a sulfur atom into dethiobiotin via a radical-based mechanism.</text>
</comment>
<comment type="catalytic activity">
    <reaction evidence="1">
        <text>(4R,5S)-dethiobiotin + (sulfur carrier)-SH + 2 reduced [2Fe-2S]-[ferredoxin] + 2 S-adenosyl-L-methionine = (sulfur carrier)-H + biotin + 2 5'-deoxyadenosine + 2 L-methionine + 2 oxidized [2Fe-2S]-[ferredoxin]</text>
        <dbReference type="Rhea" id="RHEA:22060"/>
        <dbReference type="Rhea" id="RHEA-COMP:10000"/>
        <dbReference type="Rhea" id="RHEA-COMP:10001"/>
        <dbReference type="Rhea" id="RHEA-COMP:14737"/>
        <dbReference type="Rhea" id="RHEA-COMP:14739"/>
        <dbReference type="ChEBI" id="CHEBI:17319"/>
        <dbReference type="ChEBI" id="CHEBI:29917"/>
        <dbReference type="ChEBI" id="CHEBI:33737"/>
        <dbReference type="ChEBI" id="CHEBI:33738"/>
        <dbReference type="ChEBI" id="CHEBI:57586"/>
        <dbReference type="ChEBI" id="CHEBI:57844"/>
        <dbReference type="ChEBI" id="CHEBI:59789"/>
        <dbReference type="ChEBI" id="CHEBI:64428"/>
        <dbReference type="ChEBI" id="CHEBI:149473"/>
        <dbReference type="EC" id="2.8.1.6"/>
    </reaction>
</comment>
<comment type="cofactor">
    <cofactor evidence="1">
        <name>[4Fe-4S] cluster</name>
        <dbReference type="ChEBI" id="CHEBI:49883"/>
    </cofactor>
    <text evidence="1">Binds 1 [4Fe-4S] cluster. The cluster is coordinated with 3 cysteines and an exchangeable S-adenosyl-L-methionine.</text>
</comment>
<comment type="cofactor">
    <cofactor evidence="1">
        <name>[2Fe-2S] cluster</name>
        <dbReference type="ChEBI" id="CHEBI:190135"/>
    </cofactor>
    <text evidence="1">Binds 1 [2Fe-2S] cluster. The cluster is coordinated with 3 cysteines and 1 arginine.</text>
</comment>
<comment type="pathway">
    <text evidence="1">Cofactor biosynthesis; biotin biosynthesis; biotin from 7,8-diaminononanoate: step 2/2.</text>
</comment>
<comment type="subunit">
    <text evidence="1">Homodimer.</text>
</comment>
<comment type="similarity">
    <text evidence="1">Belongs to the radical SAM superfamily. Biotin synthase family.</text>
</comment>
<feature type="chain" id="PRO_0000381308" description="Biotin synthase">
    <location>
        <begin position="1"/>
        <end position="328"/>
    </location>
</feature>
<feature type="domain" description="Radical SAM core" evidence="2">
    <location>
        <begin position="51"/>
        <end position="282"/>
    </location>
</feature>
<feature type="binding site" evidence="1">
    <location>
        <position position="69"/>
    </location>
    <ligand>
        <name>[4Fe-4S] cluster</name>
        <dbReference type="ChEBI" id="CHEBI:49883"/>
        <note>4Fe-4S-S-AdoMet</note>
    </ligand>
</feature>
<feature type="binding site" evidence="1">
    <location>
        <position position="73"/>
    </location>
    <ligand>
        <name>[4Fe-4S] cluster</name>
        <dbReference type="ChEBI" id="CHEBI:49883"/>
        <note>4Fe-4S-S-AdoMet</note>
    </ligand>
</feature>
<feature type="binding site" evidence="1">
    <location>
        <position position="76"/>
    </location>
    <ligand>
        <name>[4Fe-4S] cluster</name>
        <dbReference type="ChEBI" id="CHEBI:49883"/>
        <note>4Fe-4S-S-AdoMet</note>
    </ligand>
</feature>
<feature type="binding site" evidence="1">
    <location>
        <position position="112"/>
    </location>
    <ligand>
        <name>[2Fe-2S] cluster</name>
        <dbReference type="ChEBI" id="CHEBI:190135"/>
    </ligand>
</feature>
<feature type="binding site" evidence="1">
    <location>
        <position position="147"/>
    </location>
    <ligand>
        <name>[2Fe-2S] cluster</name>
        <dbReference type="ChEBI" id="CHEBI:190135"/>
    </ligand>
</feature>
<feature type="binding site" evidence="1">
    <location>
        <position position="207"/>
    </location>
    <ligand>
        <name>[2Fe-2S] cluster</name>
        <dbReference type="ChEBI" id="CHEBI:190135"/>
    </ligand>
</feature>
<feature type="binding site" evidence="1">
    <location>
        <position position="277"/>
    </location>
    <ligand>
        <name>[2Fe-2S] cluster</name>
        <dbReference type="ChEBI" id="CHEBI:190135"/>
    </ligand>
</feature>
<gene>
    <name evidence="1" type="primary">bioB</name>
    <name type="ordered locus">CA_C0210</name>
</gene>
<organism>
    <name type="scientific">Clostridium acetobutylicum (strain ATCC 824 / DSM 792 / JCM 1419 / IAM 19013 / LMG 5710 / NBRC 13948 / NRRL B-527 / VKM B-1787 / 2291 / W)</name>
    <dbReference type="NCBI Taxonomy" id="272562"/>
    <lineage>
        <taxon>Bacteria</taxon>
        <taxon>Bacillati</taxon>
        <taxon>Bacillota</taxon>
        <taxon>Clostridia</taxon>
        <taxon>Eubacteriales</taxon>
        <taxon>Clostridiaceae</taxon>
        <taxon>Clostridium</taxon>
    </lineage>
</organism>
<proteinExistence type="inferred from homology"/>
<keyword id="KW-0001">2Fe-2S</keyword>
<keyword id="KW-0004">4Fe-4S</keyword>
<keyword id="KW-0093">Biotin biosynthesis</keyword>
<keyword id="KW-0408">Iron</keyword>
<keyword id="KW-0411">Iron-sulfur</keyword>
<keyword id="KW-0479">Metal-binding</keyword>
<keyword id="KW-1185">Reference proteome</keyword>
<keyword id="KW-0949">S-adenosyl-L-methionine</keyword>
<keyword id="KW-0808">Transferase</keyword>
<protein>
    <recommendedName>
        <fullName evidence="1">Biotin synthase</fullName>
        <ecNumber evidence="1">2.8.1.6</ecNumber>
    </recommendedName>
</protein>